<gene>
    <name evidence="1" type="primary">fmt</name>
    <name type="ordered locus">SSA_1848</name>
</gene>
<evidence type="ECO:0000255" key="1">
    <source>
        <dbReference type="HAMAP-Rule" id="MF_00182"/>
    </source>
</evidence>
<comment type="function">
    <text evidence="1">Attaches a formyl group to the free amino group of methionyl-tRNA(fMet). The formyl group appears to play a dual role in the initiator identity of N-formylmethionyl-tRNA by promoting its recognition by IF2 and preventing the misappropriation of this tRNA by the elongation apparatus.</text>
</comment>
<comment type="catalytic activity">
    <reaction evidence="1">
        <text>L-methionyl-tRNA(fMet) + (6R)-10-formyltetrahydrofolate = N-formyl-L-methionyl-tRNA(fMet) + (6S)-5,6,7,8-tetrahydrofolate + H(+)</text>
        <dbReference type="Rhea" id="RHEA:24380"/>
        <dbReference type="Rhea" id="RHEA-COMP:9952"/>
        <dbReference type="Rhea" id="RHEA-COMP:9953"/>
        <dbReference type="ChEBI" id="CHEBI:15378"/>
        <dbReference type="ChEBI" id="CHEBI:57453"/>
        <dbReference type="ChEBI" id="CHEBI:78530"/>
        <dbReference type="ChEBI" id="CHEBI:78844"/>
        <dbReference type="ChEBI" id="CHEBI:195366"/>
        <dbReference type="EC" id="2.1.2.9"/>
    </reaction>
</comment>
<comment type="similarity">
    <text evidence="1">Belongs to the Fmt family.</text>
</comment>
<sequence>MMKIIFMGTPDFSATVLKGLLDSGQYEVLAVVTQPDRAVGRKREIRMTPVKELALEYKLPVYQPEKLAKSSDLEELMNLEADGIVTAAFGQFLPSCLLDSVDFAVNVHASLLPKYRGGAPIHYALINGDEQAGVTIMEMVKEMDAGDMIASKATPIEETDNVGTLFEKLALIGRDLLLDVLPAYRAGQIIPQPQDPSQVTFSPNISPEEERIDWSKTNRQIFNQIRGMYPWPVAHTLLQGQRFKIYEADMMAGSGQPGQILSISKKELVVAAGKGALSLKTVQPAGKPKMAIVDFLNGLGRSLSLGDTFGK</sequence>
<feature type="chain" id="PRO_1000020184" description="Methionyl-tRNA formyltransferase">
    <location>
        <begin position="1"/>
        <end position="311"/>
    </location>
</feature>
<feature type="binding site" evidence="1">
    <location>
        <begin position="110"/>
        <end position="113"/>
    </location>
    <ligand>
        <name>(6S)-5,6,7,8-tetrahydrofolate</name>
        <dbReference type="ChEBI" id="CHEBI:57453"/>
    </ligand>
</feature>
<organism>
    <name type="scientific">Streptococcus sanguinis (strain SK36)</name>
    <dbReference type="NCBI Taxonomy" id="388919"/>
    <lineage>
        <taxon>Bacteria</taxon>
        <taxon>Bacillati</taxon>
        <taxon>Bacillota</taxon>
        <taxon>Bacilli</taxon>
        <taxon>Lactobacillales</taxon>
        <taxon>Streptococcaceae</taxon>
        <taxon>Streptococcus</taxon>
    </lineage>
</organism>
<name>FMT_STRSV</name>
<proteinExistence type="inferred from homology"/>
<dbReference type="EC" id="2.1.2.9" evidence="1"/>
<dbReference type="EMBL" id="CP000387">
    <property type="protein sequence ID" value="ABN45229.1"/>
    <property type="molecule type" value="Genomic_DNA"/>
</dbReference>
<dbReference type="RefSeq" id="WP_011837405.1">
    <property type="nucleotide sequence ID" value="NC_009009.1"/>
</dbReference>
<dbReference type="RefSeq" id="YP_001035779.1">
    <property type="nucleotide sequence ID" value="NC_009009.1"/>
</dbReference>
<dbReference type="SMR" id="A3CPX4"/>
<dbReference type="STRING" id="388919.SSA_1848"/>
<dbReference type="KEGG" id="ssa:SSA_1848"/>
<dbReference type="PATRIC" id="fig|388919.9.peg.1753"/>
<dbReference type="eggNOG" id="COG0223">
    <property type="taxonomic scope" value="Bacteria"/>
</dbReference>
<dbReference type="HOGENOM" id="CLU_033347_1_1_9"/>
<dbReference type="OrthoDB" id="9802815at2"/>
<dbReference type="Proteomes" id="UP000002148">
    <property type="component" value="Chromosome"/>
</dbReference>
<dbReference type="GO" id="GO:0005829">
    <property type="term" value="C:cytosol"/>
    <property type="evidence" value="ECO:0007669"/>
    <property type="project" value="TreeGrafter"/>
</dbReference>
<dbReference type="GO" id="GO:0004479">
    <property type="term" value="F:methionyl-tRNA formyltransferase activity"/>
    <property type="evidence" value="ECO:0007669"/>
    <property type="project" value="UniProtKB-UniRule"/>
</dbReference>
<dbReference type="CDD" id="cd08646">
    <property type="entry name" value="FMT_core_Met-tRNA-FMT_N"/>
    <property type="match status" value="1"/>
</dbReference>
<dbReference type="CDD" id="cd08704">
    <property type="entry name" value="Met_tRNA_FMT_C"/>
    <property type="match status" value="1"/>
</dbReference>
<dbReference type="FunFam" id="3.40.50.170:FF:000004">
    <property type="entry name" value="Methionyl-tRNA formyltransferase"/>
    <property type="match status" value="1"/>
</dbReference>
<dbReference type="Gene3D" id="3.10.25.10">
    <property type="entry name" value="Formyl transferase, C-terminal domain"/>
    <property type="match status" value="1"/>
</dbReference>
<dbReference type="Gene3D" id="3.40.50.170">
    <property type="entry name" value="Formyl transferase, N-terminal domain"/>
    <property type="match status" value="1"/>
</dbReference>
<dbReference type="HAMAP" id="MF_00182">
    <property type="entry name" value="Formyl_trans"/>
    <property type="match status" value="1"/>
</dbReference>
<dbReference type="InterPro" id="IPR005794">
    <property type="entry name" value="Fmt"/>
</dbReference>
<dbReference type="InterPro" id="IPR005793">
    <property type="entry name" value="Formyl_trans_C"/>
</dbReference>
<dbReference type="InterPro" id="IPR037022">
    <property type="entry name" value="Formyl_trans_C_sf"/>
</dbReference>
<dbReference type="InterPro" id="IPR002376">
    <property type="entry name" value="Formyl_transf_N"/>
</dbReference>
<dbReference type="InterPro" id="IPR036477">
    <property type="entry name" value="Formyl_transf_N_sf"/>
</dbReference>
<dbReference type="InterPro" id="IPR011034">
    <property type="entry name" value="Formyl_transferase-like_C_sf"/>
</dbReference>
<dbReference type="InterPro" id="IPR001555">
    <property type="entry name" value="GART_AS"/>
</dbReference>
<dbReference type="InterPro" id="IPR044135">
    <property type="entry name" value="Met-tRNA-FMT_C"/>
</dbReference>
<dbReference type="InterPro" id="IPR041711">
    <property type="entry name" value="Met-tRNA-FMT_N"/>
</dbReference>
<dbReference type="NCBIfam" id="TIGR00460">
    <property type="entry name" value="fmt"/>
    <property type="match status" value="1"/>
</dbReference>
<dbReference type="PANTHER" id="PTHR11138">
    <property type="entry name" value="METHIONYL-TRNA FORMYLTRANSFERASE"/>
    <property type="match status" value="1"/>
</dbReference>
<dbReference type="PANTHER" id="PTHR11138:SF5">
    <property type="entry name" value="METHIONYL-TRNA FORMYLTRANSFERASE, MITOCHONDRIAL"/>
    <property type="match status" value="1"/>
</dbReference>
<dbReference type="Pfam" id="PF02911">
    <property type="entry name" value="Formyl_trans_C"/>
    <property type="match status" value="1"/>
</dbReference>
<dbReference type="Pfam" id="PF00551">
    <property type="entry name" value="Formyl_trans_N"/>
    <property type="match status" value="1"/>
</dbReference>
<dbReference type="SUPFAM" id="SSF50486">
    <property type="entry name" value="FMT C-terminal domain-like"/>
    <property type="match status" value="1"/>
</dbReference>
<dbReference type="SUPFAM" id="SSF53328">
    <property type="entry name" value="Formyltransferase"/>
    <property type="match status" value="1"/>
</dbReference>
<dbReference type="PROSITE" id="PS00373">
    <property type="entry name" value="GART"/>
    <property type="match status" value="1"/>
</dbReference>
<keyword id="KW-0648">Protein biosynthesis</keyword>
<keyword id="KW-1185">Reference proteome</keyword>
<keyword id="KW-0808">Transferase</keyword>
<accession>A3CPX4</accession>
<protein>
    <recommendedName>
        <fullName evidence="1">Methionyl-tRNA formyltransferase</fullName>
        <ecNumber evidence="1">2.1.2.9</ecNumber>
    </recommendedName>
</protein>
<reference key="1">
    <citation type="journal article" date="2007" name="J. Bacteriol.">
        <title>Genome of the opportunistic pathogen Streptococcus sanguinis.</title>
        <authorList>
            <person name="Xu P."/>
            <person name="Alves J.M."/>
            <person name="Kitten T."/>
            <person name="Brown A."/>
            <person name="Chen Z."/>
            <person name="Ozaki L.S."/>
            <person name="Manque P."/>
            <person name="Ge X."/>
            <person name="Serrano M.G."/>
            <person name="Puiu D."/>
            <person name="Hendricks S."/>
            <person name="Wang Y."/>
            <person name="Chaplin M.D."/>
            <person name="Akan D."/>
            <person name="Paik S."/>
            <person name="Peterson D.L."/>
            <person name="Macrina F.L."/>
            <person name="Buck G.A."/>
        </authorList>
    </citation>
    <scope>NUCLEOTIDE SEQUENCE [LARGE SCALE GENOMIC DNA]</scope>
    <source>
        <strain>SK36</strain>
    </source>
</reference>